<dbReference type="EMBL" id="CR861008">
    <property type="protein sequence ID" value="CAH93105.1"/>
    <property type="molecule type" value="mRNA"/>
</dbReference>
<dbReference type="RefSeq" id="NP_001126838.1">
    <property type="nucleotide sequence ID" value="NM_001133366.1"/>
</dbReference>
<dbReference type="SMR" id="Q5R561"/>
<dbReference type="STRING" id="9601.ENSPPYP00000004994"/>
<dbReference type="Ensembl" id="ENSPPYT00000046711.1">
    <property type="protein sequence ID" value="ENSPPYP00000033261.1"/>
    <property type="gene ID" value="ENSPPYG00000035340.1"/>
</dbReference>
<dbReference type="GeneID" id="100173845"/>
<dbReference type="KEGG" id="pon:100173845"/>
<dbReference type="CTD" id="26127"/>
<dbReference type="GeneTree" id="ENSGT00390000018003"/>
<dbReference type="InParanoid" id="Q5R561"/>
<dbReference type="OrthoDB" id="21214at2759"/>
<dbReference type="Proteomes" id="UP000001595">
    <property type="component" value="Chromosome 12"/>
</dbReference>
<dbReference type="GO" id="GO:0005737">
    <property type="term" value="C:cytoplasm"/>
    <property type="evidence" value="ECO:0007669"/>
    <property type="project" value="UniProtKB-SubCell"/>
</dbReference>
<dbReference type="GO" id="GO:0009611">
    <property type="term" value="P:response to wounding"/>
    <property type="evidence" value="ECO:0007669"/>
    <property type="project" value="TreeGrafter"/>
</dbReference>
<dbReference type="InterPro" id="IPR008555">
    <property type="entry name" value="SIKE"/>
</dbReference>
<dbReference type="PANTHER" id="PTHR12186:SF3">
    <property type="entry name" value="FGFR1 ONCOGENE PARTNER 2"/>
    <property type="match status" value="1"/>
</dbReference>
<dbReference type="PANTHER" id="PTHR12186">
    <property type="entry name" value="SIKE FAMILY MEMBER"/>
    <property type="match status" value="1"/>
</dbReference>
<dbReference type="Pfam" id="PF05769">
    <property type="entry name" value="SIKE"/>
    <property type="match status" value="1"/>
</dbReference>
<proteinExistence type="evidence at transcript level"/>
<reference key="1">
    <citation type="submission" date="2004-11" db="EMBL/GenBank/DDBJ databases">
        <authorList>
            <consortium name="The German cDNA consortium"/>
        </authorList>
    </citation>
    <scope>NUCLEOTIDE SEQUENCE [LARGE SCALE MRNA]</scope>
    <source>
        <tissue>Brain cortex</tissue>
    </source>
</reference>
<sequence>MSCTIEKALADAKALVERLRDHDDAAESLIEQTTALNKRVEAMKQYQEEIQELNEVARHRPRSTLVMGIQQENRQIRELQQENKELRTSLEEHQSALELIMSKYREQMFRLLMASKKDDPGIIMKLKEQHSKELQAHVDQITEMAAVMRKAIEIDEQQGCKEQERIFQLEQENKGLREILQITRESFLNLRKDDASESTSLSALVTNSDLSLRKN</sequence>
<evidence type="ECO:0000250" key="1"/>
<evidence type="ECO:0000255" key="2"/>
<evidence type="ECO:0000256" key="3">
    <source>
        <dbReference type="SAM" id="MobiDB-lite"/>
    </source>
</evidence>
<evidence type="ECO:0000305" key="4"/>
<keyword id="KW-0175">Coiled coil</keyword>
<keyword id="KW-0963">Cytoplasm</keyword>
<keyword id="KW-1185">Reference proteome</keyword>
<accession>Q5R561</accession>
<gene>
    <name type="primary">FGFR1OP2</name>
</gene>
<comment type="function">
    <text evidence="1">May be involved in wound healing pathway.</text>
</comment>
<comment type="subcellular location">
    <subcellularLocation>
        <location evidence="1">Cytoplasm</location>
    </subcellularLocation>
</comment>
<comment type="similarity">
    <text evidence="4">Belongs to the SIKE family.</text>
</comment>
<feature type="chain" id="PRO_0000299043" description="FGFR1 oncogene partner 2 homolog">
    <location>
        <begin position="1"/>
        <end position="215"/>
    </location>
</feature>
<feature type="region of interest" description="Disordered" evidence="3">
    <location>
        <begin position="194"/>
        <end position="215"/>
    </location>
</feature>
<feature type="coiled-coil region" evidence="2">
    <location>
        <begin position="5"/>
        <end position="104"/>
    </location>
</feature>
<feature type="coiled-coil region" evidence="2">
    <location>
        <begin position="161"/>
        <end position="185"/>
    </location>
</feature>
<feature type="compositionally biased region" description="Polar residues" evidence="3">
    <location>
        <begin position="197"/>
        <end position="215"/>
    </location>
</feature>
<protein>
    <recommendedName>
        <fullName>FGFR1 oncogene partner 2 homolog</fullName>
    </recommendedName>
</protein>
<name>FGOP2_PONAB</name>
<organism>
    <name type="scientific">Pongo abelii</name>
    <name type="common">Sumatran orangutan</name>
    <name type="synonym">Pongo pygmaeus abelii</name>
    <dbReference type="NCBI Taxonomy" id="9601"/>
    <lineage>
        <taxon>Eukaryota</taxon>
        <taxon>Metazoa</taxon>
        <taxon>Chordata</taxon>
        <taxon>Craniata</taxon>
        <taxon>Vertebrata</taxon>
        <taxon>Euteleostomi</taxon>
        <taxon>Mammalia</taxon>
        <taxon>Eutheria</taxon>
        <taxon>Euarchontoglires</taxon>
        <taxon>Primates</taxon>
        <taxon>Haplorrhini</taxon>
        <taxon>Catarrhini</taxon>
        <taxon>Hominidae</taxon>
        <taxon>Pongo</taxon>
    </lineage>
</organism>